<organism>
    <name type="scientific">Psychrobacter cryohalolentis (strain ATCC BAA-1226 / DSM 17306 / VKM B-2378 / K5)</name>
    <dbReference type="NCBI Taxonomy" id="335284"/>
    <lineage>
        <taxon>Bacteria</taxon>
        <taxon>Pseudomonadati</taxon>
        <taxon>Pseudomonadota</taxon>
        <taxon>Gammaproteobacteria</taxon>
        <taxon>Moraxellales</taxon>
        <taxon>Moraxellaceae</taxon>
        <taxon>Psychrobacter</taxon>
    </lineage>
</organism>
<name>MIAB_PSYCK</name>
<reference key="1">
    <citation type="submission" date="2006-03" db="EMBL/GenBank/DDBJ databases">
        <title>Complete sequence of chromosome of Psychrobacter cryohalolentis K5.</title>
        <authorList>
            <consortium name="US DOE Joint Genome Institute"/>
            <person name="Copeland A."/>
            <person name="Lucas S."/>
            <person name="Lapidus A."/>
            <person name="Barry K."/>
            <person name="Detter J.C."/>
            <person name="Glavina T."/>
            <person name="Hammon N."/>
            <person name="Israni S."/>
            <person name="Dalin E."/>
            <person name="Tice H."/>
            <person name="Pitluck S."/>
            <person name="Brettin T."/>
            <person name="Bruce D."/>
            <person name="Han C."/>
            <person name="Tapia R."/>
            <person name="Sims D.R."/>
            <person name="Gilna P."/>
            <person name="Schmutz J."/>
            <person name="Larimer F."/>
            <person name="Land M."/>
            <person name="Hauser L."/>
            <person name="Kyrpides N."/>
            <person name="Kim E."/>
            <person name="Richardson P."/>
        </authorList>
    </citation>
    <scope>NUCLEOTIDE SEQUENCE [LARGE SCALE GENOMIC DNA]</scope>
    <source>
        <strain>ATCC BAA-1226 / DSM 17306 / VKM B-2378 / K5</strain>
    </source>
</reference>
<protein>
    <recommendedName>
        <fullName evidence="1">tRNA-2-methylthio-N(6)-dimethylallyladenosine synthase</fullName>
        <ecNumber evidence="1">2.8.4.3</ecNumber>
    </recommendedName>
    <alternativeName>
        <fullName evidence="1">(Dimethylallyl)adenosine tRNA methylthiotransferase MiaB</fullName>
    </alternativeName>
    <alternativeName>
        <fullName evidence="1">tRNA-i(6)A37 methylthiotransferase</fullName>
    </alternativeName>
</protein>
<accession>Q1Q929</accession>
<proteinExistence type="inferred from homology"/>
<evidence type="ECO:0000255" key="1">
    <source>
        <dbReference type="HAMAP-Rule" id="MF_01864"/>
    </source>
</evidence>
<evidence type="ECO:0000255" key="2">
    <source>
        <dbReference type="PROSITE-ProRule" id="PRU01266"/>
    </source>
</evidence>
<gene>
    <name evidence="1" type="primary">miaB</name>
    <name type="ordered locus">Pcryo_2047</name>
</gene>
<sequence>MSVTVFNPRIDDAAASDITAVTPVITALNELSSAQAPVEKAATKKVFVTTQGCQMNVYDSGKMLDVLGDSHGMEVTHNIDEADVLLMNTCSIREKAQEKVFSELGRWRKLKEKRPDLVIGVGGCVASQEGDNIQKRAPYVDMVFGPQTLHRLPELYDQSHQQREIAPKNRIGTVDVSFPSIEKFDFLPEPRVEGFKAFVSIMEGCSKYCSFCVVPYTRGEELSRPLDDVLAEIDSLAAQGVREINLLGQNVNGYRGEKDDGSICRFAELLHYVSHVDGVERIRYTTSHPLEFTDDIIDAYAQLPELVSHLHLPVQSGSNAILAAMKRNHTIDVYINQINKLKAIRPDIHLSSDFIIGFPGETDQDFQDTLNLAKELNFDHSYSFIYSKRPGTPAAELPDDVSFKTKKERLAEFQKVIIDSTLAKTHEMVGTTTRVLVEQVANRHPDCLIGTADNTRTVMFPYDVDKMDEMLGKIVSVRITDFVSPHMVKGEIEAVLA</sequence>
<keyword id="KW-0004">4Fe-4S</keyword>
<keyword id="KW-0963">Cytoplasm</keyword>
<keyword id="KW-0408">Iron</keyword>
<keyword id="KW-0411">Iron-sulfur</keyword>
<keyword id="KW-0479">Metal-binding</keyword>
<keyword id="KW-0949">S-adenosyl-L-methionine</keyword>
<keyword id="KW-0808">Transferase</keyword>
<keyword id="KW-0819">tRNA processing</keyword>
<feature type="chain" id="PRO_0000374472" description="tRNA-2-methylthio-N(6)-dimethylallyladenosine synthase">
    <location>
        <begin position="1"/>
        <end position="497"/>
    </location>
</feature>
<feature type="domain" description="MTTase N-terminal" evidence="1">
    <location>
        <begin position="44"/>
        <end position="161"/>
    </location>
</feature>
<feature type="domain" description="Radical SAM core" evidence="2">
    <location>
        <begin position="191"/>
        <end position="423"/>
    </location>
</feature>
<feature type="domain" description="TRAM" evidence="1">
    <location>
        <begin position="426"/>
        <end position="494"/>
    </location>
</feature>
<feature type="binding site" evidence="1">
    <location>
        <position position="53"/>
    </location>
    <ligand>
        <name>[4Fe-4S] cluster</name>
        <dbReference type="ChEBI" id="CHEBI:49883"/>
        <label>1</label>
    </ligand>
</feature>
<feature type="binding site" evidence="1">
    <location>
        <position position="90"/>
    </location>
    <ligand>
        <name>[4Fe-4S] cluster</name>
        <dbReference type="ChEBI" id="CHEBI:49883"/>
        <label>1</label>
    </ligand>
</feature>
<feature type="binding site" evidence="1">
    <location>
        <position position="124"/>
    </location>
    <ligand>
        <name>[4Fe-4S] cluster</name>
        <dbReference type="ChEBI" id="CHEBI:49883"/>
        <label>1</label>
    </ligand>
</feature>
<feature type="binding site" evidence="1">
    <location>
        <position position="205"/>
    </location>
    <ligand>
        <name>[4Fe-4S] cluster</name>
        <dbReference type="ChEBI" id="CHEBI:49883"/>
        <label>2</label>
        <note>4Fe-4S-S-AdoMet</note>
    </ligand>
</feature>
<feature type="binding site" evidence="1">
    <location>
        <position position="209"/>
    </location>
    <ligand>
        <name>[4Fe-4S] cluster</name>
        <dbReference type="ChEBI" id="CHEBI:49883"/>
        <label>2</label>
        <note>4Fe-4S-S-AdoMet</note>
    </ligand>
</feature>
<feature type="binding site" evidence="1">
    <location>
        <position position="212"/>
    </location>
    <ligand>
        <name>[4Fe-4S] cluster</name>
        <dbReference type="ChEBI" id="CHEBI:49883"/>
        <label>2</label>
        <note>4Fe-4S-S-AdoMet</note>
    </ligand>
</feature>
<comment type="function">
    <text evidence="1">Catalyzes the methylthiolation of N6-(dimethylallyl)adenosine (i(6)A), leading to the formation of 2-methylthio-N6-(dimethylallyl)adenosine (ms(2)i(6)A) at position 37 in tRNAs that read codons beginning with uridine.</text>
</comment>
<comment type="catalytic activity">
    <reaction evidence="1">
        <text>N(6)-dimethylallyladenosine(37) in tRNA + (sulfur carrier)-SH + AH2 + 2 S-adenosyl-L-methionine = 2-methylsulfanyl-N(6)-dimethylallyladenosine(37) in tRNA + (sulfur carrier)-H + 5'-deoxyadenosine + L-methionine + A + S-adenosyl-L-homocysteine + 2 H(+)</text>
        <dbReference type="Rhea" id="RHEA:37067"/>
        <dbReference type="Rhea" id="RHEA-COMP:10375"/>
        <dbReference type="Rhea" id="RHEA-COMP:10376"/>
        <dbReference type="Rhea" id="RHEA-COMP:14737"/>
        <dbReference type="Rhea" id="RHEA-COMP:14739"/>
        <dbReference type="ChEBI" id="CHEBI:13193"/>
        <dbReference type="ChEBI" id="CHEBI:15378"/>
        <dbReference type="ChEBI" id="CHEBI:17319"/>
        <dbReference type="ChEBI" id="CHEBI:17499"/>
        <dbReference type="ChEBI" id="CHEBI:29917"/>
        <dbReference type="ChEBI" id="CHEBI:57844"/>
        <dbReference type="ChEBI" id="CHEBI:57856"/>
        <dbReference type="ChEBI" id="CHEBI:59789"/>
        <dbReference type="ChEBI" id="CHEBI:64428"/>
        <dbReference type="ChEBI" id="CHEBI:74415"/>
        <dbReference type="ChEBI" id="CHEBI:74417"/>
        <dbReference type="EC" id="2.8.4.3"/>
    </reaction>
</comment>
<comment type="cofactor">
    <cofactor evidence="1">
        <name>[4Fe-4S] cluster</name>
        <dbReference type="ChEBI" id="CHEBI:49883"/>
    </cofactor>
    <text evidence="1">Binds 2 [4Fe-4S] clusters. One cluster is coordinated with 3 cysteines and an exchangeable S-adenosyl-L-methionine.</text>
</comment>
<comment type="subunit">
    <text evidence="1">Monomer.</text>
</comment>
<comment type="subcellular location">
    <subcellularLocation>
        <location evidence="1">Cytoplasm</location>
    </subcellularLocation>
</comment>
<comment type="similarity">
    <text evidence="1">Belongs to the methylthiotransferase family. MiaB subfamily.</text>
</comment>
<dbReference type="EC" id="2.8.4.3" evidence="1"/>
<dbReference type="EMBL" id="CP000323">
    <property type="protein sequence ID" value="ABE75824.1"/>
    <property type="molecule type" value="Genomic_DNA"/>
</dbReference>
<dbReference type="RefSeq" id="WP_011514364.1">
    <property type="nucleotide sequence ID" value="NC_007969.1"/>
</dbReference>
<dbReference type="SMR" id="Q1Q929"/>
<dbReference type="STRING" id="335284.Pcryo_2047"/>
<dbReference type="KEGG" id="pcr:Pcryo_2047"/>
<dbReference type="eggNOG" id="COG0621">
    <property type="taxonomic scope" value="Bacteria"/>
</dbReference>
<dbReference type="HOGENOM" id="CLU_018697_2_0_6"/>
<dbReference type="Proteomes" id="UP000002425">
    <property type="component" value="Chromosome"/>
</dbReference>
<dbReference type="GO" id="GO:0005829">
    <property type="term" value="C:cytosol"/>
    <property type="evidence" value="ECO:0007669"/>
    <property type="project" value="TreeGrafter"/>
</dbReference>
<dbReference type="GO" id="GO:0051539">
    <property type="term" value="F:4 iron, 4 sulfur cluster binding"/>
    <property type="evidence" value="ECO:0007669"/>
    <property type="project" value="UniProtKB-UniRule"/>
</dbReference>
<dbReference type="GO" id="GO:0046872">
    <property type="term" value="F:metal ion binding"/>
    <property type="evidence" value="ECO:0007669"/>
    <property type="project" value="UniProtKB-KW"/>
</dbReference>
<dbReference type="GO" id="GO:0035597">
    <property type="term" value="F:N6-isopentenyladenosine methylthiotransferase activity"/>
    <property type="evidence" value="ECO:0007669"/>
    <property type="project" value="TreeGrafter"/>
</dbReference>
<dbReference type="CDD" id="cd01335">
    <property type="entry name" value="Radical_SAM"/>
    <property type="match status" value="1"/>
</dbReference>
<dbReference type="FunFam" id="3.40.50.12160:FF:000001">
    <property type="entry name" value="tRNA-2-methylthio-N(6)-dimethylallyladenosine synthase"/>
    <property type="match status" value="1"/>
</dbReference>
<dbReference type="FunFam" id="3.80.30.20:FF:000001">
    <property type="entry name" value="tRNA-2-methylthio-N(6)-dimethylallyladenosine synthase 2"/>
    <property type="match status" value="1"/>
</dbReference>
<dbReference type="Gene3D" id="3.40.50.12160">
    <property type="entry name" value="Methylthiotransferase, N-terminal domain"/>
    <property type="match status" value="1"/>
</dbReference>
<dbReference type="Gene3D" id="3.80.30.20">
    <property type="entry name" value="tm_1862 like domain"/>
    <property type="match status" value="1"/>
</dbReference>
<dbReference type="HAMAP" id="MF_01864">
    <property type="entry name" value="tRNA_metthiotr_MiaB"/>
    <property type="match status" value="1"/>
</dbReference>
<dbReference type="InterPro" id="IPR006638">
    <property type="entry name" value="Elp3/MiaA/NifB-like_rSAM"/>
</dbReference>
<dbReference type="InterPro" id="IPR005839">
    <property type="entry name" value="Methylthiotransferase"/>
</dbReference>
<dbReference type="InterPro" id="IPR020612">
    <property type="entry name" value="Methylthiotransferase_CS"/>
</dbReference>
<dbReference type="InterPro" id="IPR013848">
    <property type="entry name" value="Methylthiotransferase_N"/>
</dbReference>
<dbReference type="InterPro" id="IPR038135">
    <property type="entry name" value="Methylthiotransferase_N_sf"/>
</dbReference>
<dbReference type="InterPro" id="IPR006463">
    <property type="entry name" value="MiaB_methiolase"/>
</dbReference>
<dbReference type="InterPro" id="IPR007197">
    <property type="entry name" value="rSAM"/>
</dbReference>
<dbReference type="InterPro" id="IPR023404">
    <property type="entry name" value="rSAM_horseshoe"/>
</dbReference>
<dbReference type="InterPro" id="IPR002792">
    <property type="entry name" value="TRAM_dom"/>
</dbReference>
<dbReference type="NCBIfam" id="TIGR01574">
    <property type="entry name" value="miaB-methiolase"/>
    <property type="match status" value="1"/>
</dbReference>
<dbReference type="NCBIfam" id="TIGR00089">
    <property type="entry name" value="MiaB/RimO family radical SAM methylthiotransferase"/>
    <property type="match status" value="1"/>
</dbReference>
<dbReference type="PANTHER" id="PTHR43020">
    <property type="entry name" value="CDK5 REGULATORY SUBUNIT-ASSOCIATED PROTEIN 1"/>
    <property type="match status" value="1"/>
</dbReference>
<dbReference type="PANTHER" id="PTHR43020:SF2">
    <property type="entry name" value="MITOCHONDRIAL TRNA METHYLTHIOTRANSFERASE CDK5RAP1"/>
    <property type="match status" value="1"/>
</dbReference>
<dbReference type="Pfam" id="PF04055">
    <property type="entry name" value="Radical_SAM"/>
    <property type="match status" value="1"/>
</dbReference>
<dbReference type="Pfam" id="PF01938">
    <property type="entry name" value="TRAM"/>
    <property type="match status" value="1"/>
</dbReference>
<dbReference type="Pfam" id="PF00919">
    <property type="entry name" value="UPF0004"/>
    <property type="match status" value="1"/>
</dbReference>
<dbReference type="SFLD" id="SFLDF00273">
    <property type="entry name" value="(dimethylallyl)adenosine_tRNA"/>
    <property type="match status" value="1"/>
</dbReference>
<dbReference type="SFLD" id="SFLDG01082">
    <property type="entry name" value="B12-binding_domain_containing"/>
    <property type="match status" value="1"/>
</dbReference>
<dbReference type="SFLD" id="SFLDS00029">
    <property type="entry name" value="Radical_SAM"/>
    <property type="match status" value="1"/>
</dbReference>
<dbReference type="SMART" id="SM00729">
    <property type="entry name" value="Elp3"/>
    <property type="match status" value="1"/>
</dbReference>
<dbReference type="SUPFAM" id="SSF102114">
    <property type="entry name" value="Radical SAM enzymes"/>
    <property type="match status" value="1"/>
</dbReference>
<dbReference type="PROSITE" id="PS51449">
    <property type="entry name" value="MTTASE_N"/>
    <property type="match status" value="1"/>
</dbReference>
<dbReference type="PROSITE" id="PS01278">
    <property type="entry name" value="MTTASE_RADICAL"/>
    <property type="match status" value="1"/>
</dbReference>
<dbReference type="PROSITE" id="PS51918">
    <property type="entry name" value="RADICAL_SAM"/>
    <property type="match status" value="1"/>
</dbReference>
<dbReference type="PROSITE" id="PS50926">
    <property type="entry name" value="TRAM"/>
    <property type="match status" value="1"/>
</dbReference>